<name>RECF_ALISL</name>
<dbReference type="EMBL" id="FM178379">
    <property type="protein sequence ID" value="CAQ77696.1"/>
    <property type="molecule type" value="Genomic_DNA"/>
</dbReference>
<dbReference type="RefSeq" id="WP_012548921.1">
    <property type="nucleotide sequence ID" value="NC_011312.1"/>
</dbReference>
<dbReference type="SMR" id="B6EP48"/>
<dbReference type="KEGG" id="vsa:VSAL_I0011"/>
<dbReference type="eggNOG" id="COG1195">
    <property type="taxonomic scope" value="Bacteria"/>
</dbReference>
<dbReference type="HOGENOM" id="CLU_040267_0_0_6"/>
<dbReference type="Proteomes" id="UP000001730">
    <property type="component" value="Chromosome 1"/>
</dbReference>
<dbReference type="GO" id="GO:0005737">
    <property type="term" value="C:cytoplasm"/>
    <property type="evidence" value="ECO:0007669"/>
    <property type="project" value="UniProtKB-SubCell"/>
</dbReference>
<dbReference type="GO" id="GO:0005524">
    <property type="term" value="F:ATP binding"/>
    <property type="evidence" value="ECO:0007669"/>
    <property type="project" value="UniProtKB-UniRule"/>
</dbReference>
<dbReference type="GO" id="GO:0003697">
    <property type="term" value="F:single-stranded DNA binding"/>
    <property type="evidence" value="ECO:0007669"/>
    <property type="project" value="UniProtKB-UniRule"/>
</dbReference>
<dbReference type="GO" id="GO:0006260">
    <property type="term" value="P:DNA replication"/>
    <property type="evidence" value="ECO:0007669"/>
    <property type="project" value="UniProtKB-UniRule"/>
</dbReference>
<dbReference type="GO" id="GO:0000731">
    <property type="term" value="P:DNA synthesis involved in DNA repair"/>
    <property type="evidence" value="ECO:0007669"/>
    <property type="project" value="TreeGrafter"/>
</dbReference>
<dbReference type="GO" id="GO:0006302">
    <property type="term" value="P:double-strand break repair"/>
    <property type="evidence" value="ECO:0007669"/>
    <property type="project" value="TreeGrafter"/>
</dbReference>
<dbReference type="GO" id="GO:0009432">
    <property type="term" value="P:SOS response"/>
    <property type="evidence" value="ECO:0007669"/>
    <property type="project" value="UniProtKB-UniRule"/>
</dbReference>
<dbReference type="FunFam" id="1.20.1050.90:FF:000001">
    <property type="entry name" value="DNA replication and repair protein RecF"/>
    <property type="match status" value="1"/>
</dbReference>
<dbReference type="Gene3D" id="3.40.50.300">
    <property type="entry name" value="P-loop containing nucleotide triphosphate hydrolases"/>
    <property type="match status" value="1"/>
</dbReference>
<dbReference type="Gene3D" id="1.20.1050.90">
    <property type="entry name" value="RecF/RecN/SMC, N-terminal domain"/>
    <property type="match status" value="1"/>
</dbReference>
<dbReference type="HAMAP" id="MF_00365">
    <property type="entry name" value="RecF"/>
    <property type="match status" value="1"/>
</dbReference>
<dbReference type="InterPro" id="IPR001238">
    <property type="entry name" value="DNA-binding_RecF"/>
</dbReference>
<dbReference type="InterPro" id="IPR018078">
    <property type="entry name" value="DNA-binding_RecF_CS"/>
</dbReference>
<dbReference type="InterPro" id="IPR027417">
    <property type="entry name" value="P-loop_NTPase"/>
</dbReference>
<dbReference type="InterPro" id="IPR003395">
    <property type="entry name" value="RecF/RecN/SMC_N"/>
</dbReference>
<dbReference type="InterPro" id="IPR042174">
    <property type="entry name" value="RecF_2"/>
</dbReference>
<dbReference type="NCBIfam" id="TIGR00611">
    <property type="entry name" value="recf"/>
    <property type="match status" value="1"/>
</dbReference>
<dbReference type="PANTHER" id="PTHR32182">
    <property type="entry name" value="DNA REPLICATION AND REPAIR PROTEIN RECF"/>
    <property type="match status" value="1"/>
</dbReference>
<dbReference type="PANTHER" id="PTHR32182:SF0">
    <property type="entry name" value="DNA REPLICATION AND REPAIR PROTEIN RECF"/>
    <property type="match status" value="1"/>
</dbReference>
<dbReference type="Pfam" id="PF02463">
    <property type="entry name" value="SMC_N"/>
    <property type="match status" value="1"/>
</dbReference>
<dbReference type="SUPFAM" id="SSF52540">
    <property type="entry name" value="P-loop containing nucleoside triphosphate hydrolases"/>
    <property type="match status" value="1"/>
</dbReference>
<dbReference type="PROSITE" id="PS00617">
    <property type="entry name" value="RECF_1"/>
    <property type="match status" value="1"/>
</dbReference>
<dbReference type="PROSITE" id="PS00618">
    <property type="entry name" value="RECF_2"/>
    <property type="match status" value="1"/>
</dbReference>
<reference key="1">
    <citation type="journal article" date="2008" name="BMC Genomics">
        <title>The genome sequence of the fish pathogen Aliivibrio salmonicida strain LFI1238 shows extensive evidence of gene decay.</title>
        <authorList>
            <person name="Hjerde E."/>
            <person name="Lorentzen M.S."/>
            <person name="Holden M.T."/>
            <person name="Seeger K."/>
            <person name="Paulsen S."/>
            <person name="Bason N."/>
            <person name="Churcher C."/>
            <person name="Harris D."/>
            <person name="Norbertczak H."/>
            <person name="Quail M.A."/>
            <person name="Sanders S."/>
            <person name="Thurston S."/>
            <person name="Parkhill J."/>
            <person name="Willassen N.P."/>
            <person name="Thomson N.R."/>
        </authorList>
    </citation>
    <scope>NUCLEOTIDE SEQUENCE [LARGE SCALE GENOMIC DNA]</scope>
    <source>
        <strain>LFI1238</strain>
    </source>
</reference>
<feature type="chain" id="PRO_1000121084" description="DNA replication and repair protein RecF">
    <location>
        <begin position="1"/>
        <end position="359"/>
    </location>
</feature>
<feature type="binding site" evidence="1">
    <location>
        <begin position="30"/>
        <end position="37"/>
    </location>
    <ligand>
        <name>ATP</name>
        <dbReference type="ChEBI" id="CHEBI:30616"/>
    </ligand>
</feature>
<proteinExistence type="inferred from homology"/>
<sequence>MPLSRLIINDFRNIETCDIQLSTGFNFVIGPNGSGKTSVLEAIYLLGHGRSFKSSLTGRIIRNSCDELFIHGRFTTPEQFELPIGINKQRDGTTEVKIGGESGQKLAQLAKVLPLQLIHPEGFELVTDGPKFRRAFIDWGVFHVEPAFYEAWSRVKRLTKQRNALLKTAQSYRELSYWDLELANLAEKIDQWRVDYINHISEATQQICQAFLPEYDIKLSYYRGWERETPYAELLKRNFERDKQLGYTVGGPNKADLRIKVAGTPVEDVLSRGQLKLMVCALRLAQGQHLTEATGKQCIYLIDDFASELDSHRRQLLAQYLKQTKAQVFISSITAEQIADMHDEESKMFEIEHGKIAQG</sequence>
<gene>
    <name evidence="1" type="primary">recF</name>
    <name type="ordered locus">VSAL_I0011</name>
</gene>
<keyword id="KW-0067">ATP-binding</keyword>
<keyword id="KW-0963">Cytoplasm</keyword>
<keyword id="KW-0227">DNA damage</keyword>
<keyword id="KW-0234">DNA repair</keyword>
<keyword id="KW-0235">DNA replication</keyword>
<keyword id="KW-0238">DNA-binding</keyword>
<keyword id="KW-0547">Nucleotide-binding</keyword>
<keyword id="KW-0742">SOS response</keyword>
<accession>B6EP48</accession>
<comment type="function">
    <text evidence="1">The RecF protein is involved in DNA metabolism; it is required for DNA replication and normal SOS inducibility. RecF binds preferentially to single-stranded, linear DNA. It also seems to bind ATP.</text>
</comment>
<comment type="subcellular location">
    <subcellularLocation>
        <location evidence="1">Cytoplasm</location>
    </subcellularLocation>
</comment>
<comment type="similarity">
    <text evidence="1">Belongs to the RecF family.</text>
</comment>
<organism>
    <name type="scientific">Aliivibrio salmonicida (strain LFI1238)</name>
    <name type="common">Vibrio salmonicida (strain LFI1238)</name>
    <dbReference type="NCBI Taxonomy" id="316275"/>
    <lineage>
        <taxon>Bacteria</taxon>
        <taxon>Pseudomonadati</taxon>
        <taxon>Pseudomonadota</taxon>
        <taxon>Gammaproteobacteria</taxon>
        <taxon>Vibrionales</taxon>
        <taxon>Vibrionaceae</taxon>
        <taxon>Aliivibrio</taxon>
    </lineage>
</organism>
<protein>
    <recommendedName>
        <fullName evidence="1">DNA replication and repair protein RecF</fullName>
    </recommendedName>
</protein>
<evidence type="ECO:0000255" key="1">
    <source>
        <dbReference type="HAMAP-Rule" id="MF_00365"/>
    </source>
</evidence>